<name>ATPB_BDEBA</name>
<sequence>MAFGKVKQVMGPVVDVEFEGGELPAINSALRVSNKFISDVEFNLVLEVAQHLGDGVVRTISMDQTEGLVRGEKVKALGTQITAPVGREALGRIINVVGEPIDEMGPVNAKEQWGIHRTAPKFEDQATAAAMLMTGIKVVDLLAPYAKGGKIGLFGGAGVGKTVLIQELIRNIATEHGGFSVFAGVGERTREGNDLWQEMKQSGVLAKTSLVFGQMNEPPGARARVALTGLTVAEYFRDVENQDVLFFVDNIFRFTQAGAEVSALLGRIPSAVGYQPTLATEMGTLQERITSTKKGSITSVQAVYVPADDYTDPAPATTFTHLDATTNLDRDIAAMAIFPAVHPLTSTSRLLDPTVIGEEHYKCARDVQALLQRNRELQDIIAILGMDELSESDKLVVSRSRKIQRFLSQPFFVAEQFTGLPGKYVDIKDTVKGFREILDGKHDALPEQAFYLVGTIEDAIEKAKKLQA</sequence>
<keyword id="KW-0066">ATP synthesis</keyword>
<keyword id="KW-0067">ATP-binding</keyword>
<keyword id="KW-0997">Cell inner membrane</keyword>
<keyword id="KW-1003">Cell membrane</keyword>
<keyword id="KW-0139">CF(1)</keyword>
<keyword id="KW-0375">Hydrogen ion transport</keyword>
<keyword id="KW-0406">Ion transport</keyword>
<keyword id="KW-0472">Membrane</keyword>
<keyword id="KW-0547">Nucleotide-binding</keyword>
<keyword id="KW-1185">Reference proteome</keyword>
<keyword id="KW-1278">Translocase</keyword>
<keyword id="KW-0813">Transport</keyword>
<dbReference type="EC" id="7.1.2.2" evidence="1"/>
<dbReference type="EMBL" id="BX842656">
    <property type="protein sequence ID" value="CAE81252.1"/>
    <property type="molecule type" value="Genomic_DNA"/>
</dbReference>
<dbReference type="RefSeq" id="WP_011166195.1">
    <property type="nucleotide sequence ID" value="NC_005363.1"/>
</dbReference>
<dbReference type="SMR" id="Q6MGM7"/>
<dbReference type="STRING" id="264462.Bd3897"/>
<dbReference type="GeneID" id="93014663"/>
<dbReference type="KEGG" id="bba:Bd3897"/>
<dbReference type="eggNOG" id="COG0055">
    <property type="taxonomic scope" value="Bacteria"/>
</dbReference>
<dbReference type="HOGENOM" id="CLU_022398_0_2_7"/>
<dbReference type="Proteomes" id="UP000008080">
    <property type="component" value="Chromosome"/>
</dbReference>
<dbReference type="GO" id="GO:0005886">
    <property type="term" value="C:plasma membrane"/>
    <property type="evidence" value="ECO:0007669"/>
    <property type="project" value="UniProtKB-SubCell"/>
</dbReference>
<dbReference type="GO" id="GO:0045259">
    <property type="term" value="C:proton-transporting ATP synthase complex"/>
    <property type="evidence" value="ECO:0007669"/>
    <property type="project" value="UniProtKB-KW"/>
</dbReference>
<dbReference type="GO" id="GO:0005524">
    <property type="term" value="F:ATP binding"/>
    <property type="evidence" value="ECO:0007669"/>
    <property type="project" value="UniProtKB-UniRule"/>
</dbReference>
<dbReference type="GO" id="GO:0016887">
    <property type="term" value="F:ATP hydrolysis activity"/>
    <property type="evidence" value="ECO:0007669"/>
    <property type="project" value="InterPro"/>
</dbReference>
<dbReference type="GO" id="GO:0046933">
    <property type="term" value="F:proton-transporting ATP synthase activity, rotational mechanism"/>
    <property type="evidence" value="ECO:0007669"/>
    <property type="project" value="UniProtKB-UniRule"/>
</dbReference>
<dbReference type="CDD" id="cd18110">
    <property type="entry name" value="ATP-synt_F1_beta_C"/>
    <property type="match status" value="1"/>
</dbReference>
<dbReference type="CDD" id="cd18115">
    <property type="entry name" value="ATP-synt_F1_beta_N"/>
    <property type="match status" value="1"/>
</dbReference>
<dbReference type="CDD" id="cd01133">
    <property type="entry name" value="F1-ATPase_beta_CD"/>
    <property type="match status" value="1"/>
</dbReference>
<dbReference type="FunFam" id="1.10.1140.10:FF:000001">
    <property type="entry name" value="ATP synthase subunit beta"/>
    <property type="match status" value="1"/>
</dbReference>
<dbReference type="FunFam" id="2.40.10.170:FF:000005">
    <property type="entry name" value="ATP synthase subunit beta"/>
    <property type="match status" value="1"/>
</dbReference>
<dbReference type="FunFam" id="3.40.50.300:FF:000026">
    <property type="entry name" value="ATP synthase subunit beta"/>
    <property type="match status" value="1"/>
</dbReference>
<dbReference type="Gene3D" id="2.40.10.170">
    <property type="match status" value="1"/>
</dbReference>
<dbReference type="Gene3D" id="1.10.1140.10">
    <property type="entry name" value="Bovine Mitochondrial F1-atpase, Atp Synthase Beta Chain, Chain D, domain 3"/>
    <property type="match status" value="1"/>
</dbReference>
<dbReference type="Gene3D" id="3.40.50.300">
    <property type="entry name" value="P-loop containing nucleotide triphosphate hydrolases"/>
    <property type="match status" value="1"/>
</dbReference>
<dbReference type="HAMAP" id="MF_01347">
    <property type="entry name" value="ATP_synth_beta_bact"/>
    <property type="match status" value="1"/>
</dbReference>
<dbReference type="InterPro" id="IPR003593">
    <property type="entry name" value="AAA+_ATPase"/>
</dbReference>
<dbReference type="InterPro" id="IPR055190">
    <property type="entry name" value="ATP-synt_VA_C"/>
</dbReference>
<dbReference type="InterPro" id="IPR005722">
    <property type="entry name" value="ATP_synth_F1_bsu"/>
</dbReference>
<dbReference type="InterPro" id="IPR020003">
    <property type="entry name" value="ATPase_a/bsu_AS"/>
</dbReference>
<dbReference type="InterPro" id="IPR050053">
    <property type="entry name" value="ATPase_alpha/beta_chains"/>
</dbReference>
<dbReference type="InterPro" id="IPR004100">
    <property type="entry name" value="ATPase_F1/V1/A1_a/bsu_N"/>
</dbReference>
<dbReference type="InterPro" id="IPR036121">
    <property type="entry name" value="ATPase_F1/V1/A1_a/bsu_N_sf"/>
</dbReference>
<dbReference type="InterPro" id="IPR000194">
    <property type="entry name" value="ATPase_F1/V1/A1_a/bsu_nucl-bd"/>
</dbReference>
<dbReference type="InterPro" id="IPR024034">
    <property type="entry name" value="ATPase_F1/V1_b/a_C"/>
</dbReference>
<dbReference type="InterPro" id="IPR027417">
    <property type="entry name" value="P-loop_NTPase"/>
</dbReference>
<dbReference type="NCBIfam" id="TIGR01039">
    <property type="entry name" value="atpD"/>
    <property type="match status" value="1"/>
</dbReference>
<dbReference type="PANTHER" id="PTHR15184">
    <property type="entry name" value="ATP SYNTHASE"/>
    <property type="match status" value="1"/>
</dbReference>
<dbReference type="PANTHER" id="PTHR15184:SF71">
    <property type="entry name" value="ATP SYNTHASE SUBUNIT BETA, MITOCHONDRIAL"/>
    <property type="match status" value="1"/>
</dbReference>
<dbReference type="Pfam" id="PF00006">
    <property type="entry name" value="ATP-synt_ab"/>
    <property type="match status" value="1"/>
</dbReference>
<dbReference type="Pfam" id="PF02874">
    <property type="entry name" value="ATP-synt_ab_N"/>
    <property type="match status" value="1"/>
</dbReference>
<dbReference type="Pfam" id="PF22919">
    <property type="entry name" value="ATP-synt_VA_C"/>
    <property type="match status" value="1"/>
</dbReference>
<dbReference type="SMART" id="SM00382">
    <property type="entry name" value="AAA"/>
    <property type="match status" value="1"/>
</dbReference>
<dbReference type="SUPFAM" id="SSF47917">
    <property type="entry name" value="C-terminal domain of alpha and beta subunits of F1 ATP synthase"/>
    <property type="match status" value="1"/>
</dbReference>
<dbReference type="SUPFAM" id="SSF50615">
    <property type="entry name" value="N-terminal domain of alpha and beta subunits of F1 ATP synthase"/>
    <property type="match status" value="1"/>
</dbReference>
<dbReference type="SUPFAM" id="SSF52540">
    <property type="entry name" value="P-loop containing nucleoside triphosphate hydrolases"/>
    <property type="match status" value="1"/>
</dbReference>
<dbReference type="PROSITE" id="PS00152">
    <property type="entry name" value="ATPASE_ALPHA_BETA"/>
    <property type="match status" value="1"/>
</dbReference>
<comment type="function">
    <text evidence="1">Produces ATP from ADP in the presence of a proton gradient across the membrane. The catalytic sites are hosted primarily by the beta subunits.</text>
</comment>
<comment type="catalytic activity">
    <reaction evidence="1">
        <text>ATP + H2O + 4 H(+)(in) = ADP + phosphate + 5 H(+)(out)</text>
        <dbReference type="Rhea" id="RHEA:57720"/>
        <dbReference type="ChEBI" id="CHEBI:15377"/>
        <dbReference type="ChEBI" id="CHEBI:15378"/>
        <dbReference type="ChEBI" id="CHEBI:30616"/>
        <dbReference type="ChEBI" id="CHEBI:43474"/>
        <dbReference type="ChEBI" id="CHEBI:456216"/>
        <dbReference type="EC" id="7.1.2.2"/>
    </reaction>
</comment>
<comment type="subunit">
    <text evidence="1">F-type ATPases have 2 components, CF(1) - the catalytic core - and CF(0) - the membrane proton channel. CF(1) has five subunits: alpha(3), beta(3), gamma(1), delta(1), epsilon(1). CF(0) has three main subunits: a(1), b(2) and c(9-12). The alpha and beta chains form an alternating ring which encloses part of the gamma chain. CF(1) is attached to CF(0) by a central stalk formed by the gamma and epsilon chains, while a peripheral stalk is formed by the delta and b chains.</text>
</comment>
<comment type="subcellular location">
    <subcellularLocation>
        <location evidence="1">Cell inner membrane</location>
        <topology evidence="1">Peripheral membrane protein</topology>
    </subcellularLocation>
</comment>
<comment type="similarity">
    <text evidence="1">Belongs to the ATPase alpha/beta chains family.</text>
</comment>
<proteinExistence type="inferred from homology"/>
<accession>Q6MGM7</accession>
<protein>
    <recommendedName>
        <fullName evidence="1">ATP synthase subunit beta</fullName>
        <ecNumber evidence="1">7.1.2.2</ecNumber>
    </recommendedName>
    <alternativeName>
        <fullName evidence="1">ATP synthase F1 sector subunit beta</fullName>
    </alternativeName>
    <alternativeName>
        <fullName evidence="1">F-ATPase subunit beta</fullName>
    </alternativeName>
</protein>
<organism>
    <name type="scientific">Bdellovibrio bacteriovorus (strain ATCC 15356 / DSM 50701 / NCIMB 9529 / HD100)</name>
    <dbReference type="NCBI Taxonomy" id="264462"/>
    <lineage>
        <taxon>Bacteria</taxon>
        <taxon>Pseudomonadati</taxon>
        <taxon>Bdellovibrionota</taxon>
        <taxon>Bdellovibrionia</taxon>
        <taxon>Bdellovibrionales</taxon>
        <taxon>Pseudobdellovibrionaceae</taxon>
        <taxon>Bdellovibrio</taxon>
    </lineage>
</organism>
<gene>
    <name evidence="1" type="primary">atpD</name>
    <name type="ordered locus">Bd3897</name>
</gene>
<feature type="chain" id="PRO_0000254217" description="ATP synthase subunit beta">
    <location>
        <begin position="1"/>
        <end position="468"/>
    </location>
</feature>
<feature type="binding site" evidence="1">
    <location>
        <begin position="155"/>
        <end position="162"/>
    </location>
    <ligand>
        <name>ATP</name>
        <dbReference type="ChEBI" id="CHEBI:30616"/>
    </ligand>
</feature>
<evidence type="ECO:0000255" key="1">
    <source>
        <dbReference type="HAMAP-Rule" id="MF_01347"/>
    </source>
</evidence>
<reference key="1">
    <citation type="journal article" date="2004" name="Science">
        <title>A predator unmasked: life cycle of Bdellovibrio bacteriovorus from a genomic perspective.</title>
        <authorList>
            <person name="Rendulic S."/>
            <person name="Jagtap P."/>
            <person name="Rosinus A."/>
            <person name="Eppinger M."/>
            <person name="Baar C."/>
            <person name="Lanz C."/>
            <person name="Keller H."/>
            <person name="Lambert C."/>
            <person name="Evans K.J."/>
            <person name="Goesmann A."/>
            <person name="Meyer F."/>
            <person name="Sockett R.E."/>
            <person name="Schuster S.C."/>
        </authorList>
    </citation>
    <scope>NUCLEOTIDE SEQUENCE [LARGE SCALE GENOMIC DNA]</scope>
    <source>
        <strain>ATCC 15356 / DSM 50701 / NCIMB 9529 / HD100</strain>
    </source>
</reference>